<keyword id="KW-1003">Cell membrane</keyword>
<keyword id="KW-0285">Flavoprotein</keyword>
<keyword id="KW-0288">FMN</keyword>
<keyword id="KW-0472">Membrane</keyword>
<keyword id="KW-0560">Oxidoreductase</keyword>
<keyword id="KW-0665">Pyrimidine biosynthesis</keyword>
<keyword id="KW-1185">Reference proteome</keyword>
<name>PYRD_AZOC5</name>
<comment type="function">
    <text evidence="1">Catalyzes the conversion of dihydroorotate to orotate with quinone as electron acceptor.</text>
</comment>
<comment type="catalytic activity">
    <reaction evidence="1">
        <text>(S)-dihydroorotate + a quinone = orotate + a quinol</text>
        <dbReference type="Rhea" id="RHEA:30187"/>
        <dbReference type="ChEBI" id="CHEBI:24646"/>
        <dbReference type="ChEBI" id="CHEBI:30839"/>
        <dbReference type="ChEBI" id="CHEBI:30864"/>
        <dbReference type="ChEBI" id="CHEBI:132124"/>
        <dbReference type="EC" id="1.3.5.2"/>
    </reaction>
</comment>
<comment type="cofactor">
    <cofactor evidence="1">
        <name>FMN</name>
        <dbReference type="ChEBI" id="CHEBI:58210"/>
    </cofactor>
    <text evidence="1">Binds 1 FMN per subunit.</text>
</comment>
<comment type="pathway">
    <text evidence="1">Pyrimidine metabolism; UMP biosynthesis via de novo pathway; orotate from (S)-dihydroorotate (quinone route): step 1/1.</text>
</comment>
<comment type="subunit">
    <text evidence="1">Monomer.</text>
</comment>
<comment type="subcellular location">
    <subcellularLocation>
        <location evidence="1">Cell membrane</location>
        <topology evidence="1">Peripheral membrane protein</topology>
    </subcellularLocation>
</comment>
<comment type="similarity">
    <text evidence="1">Belongs to the dihydroorotate dehydrogenase family. Type 2 subfamily.</text>
</comment>
<proteinExistence type="inferred from homology"/>
<feature type="chain" id="PRO_1000071765" description="Dihydroorotate dehydrogenase (quinone)">
    <location>
        <begin position="1"/>
        <end position="356"/>
    </location>
</feature>
<feature type="active site" description="Nucleophile" evidence="1">
    <location>
        <position position="174"/>
    </location>
</feature>
<feature type="binding site" evidence="1">
    <location>
        <begin position="60"/>
        <end position="64"/>
    </location>
    <ligand>
        <name>FMN</name>
        <dbReference type="ChEBI" id="CHEBI:58210"/>
    </ligand>
</feature>
<feature type="binding site" evidence="1">
    <location>
        <position position="64"/>
    </location>
    <ligand>
        <name>substrate</name>
    </ligand>
</feature>
<feature type="binding site" evidence="1">
    <location>
        <position position="84"/>
    </location>
    <ligand>
        <name>FMN</name>
        <dbReference type="ChEBI" id="CHEBI:58210"/>
    </ligand>
</feature>
<feature type="binding site" evidence="1">
    <location>
        <begin position="109"/>
        <end position="113"/>
    </location>
    <ligand>
        <name>substrate</name>
    </ligand>
</feature>
<feature type="binding site" evidence="1">
    <location>
        <position position="140"/>
    </location>
    <ligand>
        <name>FMN</name>
        <dbReference type="ChEBI" id="CHEBI:58210"/>
    </ligand>
</feature>
<feature type="binding site" evidence="1">
    <location>
        <position position="171"/>
    </location>
    <ligand>
        <name>FMN</name>
        <dbReference type="ChEBI" id="CHEBI:58210"/>
    </ligand>
</feature>
<feature type="binding site" evidence="1">
    <location>
        <position position="171"/>
    </location>
    <ligand>
        <name>substrate</name>
    </ligand>
</feature>
<feature type="binding site" evidence="1">
    <location>
        <position position="176"/>
    </location>
    <ligand>
        <name>substrate</name>
    </ligand>
</feature>
<feature type="binding site" evidence="1">
    <location>
        <position position="216"/>
    </location>
    <ligand>
        <name>FMN</name>
        <dbReference type="ChEBI" id="CHEBI:58210"/>
    </ligand>
</feature>
<feature type="binding site" evidence="1">
    <location>
        <position position="244"/>
    </location>
    <ligand>
        <name>FMN</name>
        <dbReference type="ChEBI" id="CHEBI:58210"/>
    </ligand>
</feature>
<feature type="binding site" evidence="1">
    <location>
        <begin position="245"/>
        <end position="246"/>
    </location>
    <ligand>
        <name>substrate</name>
    </ligand>
</feature>
<feature type="binding site" evidence="1">
    <location>
        <position position="267"/>
    </location>
    <ligand>
        <name>FMN</name>
        <dbReference type="ChEBI" id="CHEBI:58210"/>
    </ligand>
</feature>
<feature type="binding site" evidence="1">
    <location>
        <position position="296"/>
    </location>
    <ligand>
        <name>FMN</name>
        <dbReference type="ChEBI" id="CHEBI:58210"/>
    </ligand>
</feature>
<feature type="binding site" evidence="1">
    <location>
        <begin position="317"/>
        <end position="318"/>
    </location>
    <ligand>
        <name>FMN</name>
        <dbReference type="ChEBI" id="CHEBI:58210"/>
    </ligand>
</feature>
<organism>
    <name type="scientific">Azorhizobium caulinodans (strain ATCC 43989 / DSM 5975 / JCM 20966 / LMG 6465 / NBRC 14845 / NCIMB 13405 / ORS 571)</name>
    <dbReference type="NCBI Taxonomy" id="438753"/>
    <lineage>
        <taxon>Bacteria</taxon>
        <taxon>Pseudomonadati</taxon>
        <taxon>Pseudomonadota</taxon>
        <taxon>Alphaproteobacteria</taxon>
        <taxon>Hyphomicrobiales</taxon>
        <taxon>Xanthobacteraceae</taxon>
        <taxon>Azorhizobium</taxon>
    </lineage>
</organism>
<sequence length="356" mass="37501">MDLYPLVRPFLPLFTPEQAHGLSIRALKKGLVPADRSPADPVLRTRVWNIDFPNPVGLAAGFDKDAEIIDPLLSLGFGFVEAGSVTPRPQPGNPKPRLFRLDEDEGVINRFGFNSQGLAPFIYQLGKRKAAGLPGIVGANVGKNKETEDASEDYVAGVSATCRLADYIVCNVSSPNTPGLRLLQARTEMSALIGAALSARNDSLPDAATRPPLLVKVAPDLDDAGLEAVAEVTLELGVDGIIMGNTTISRPDSLRSRHKGETGGLSGAPLFTLSTERLGALYRLVRGRIPLVGAGGIASGADAYAKIRAGASLVQLYSALVFHGPALVPRIKADLAARLKADGFRSVADAVGADIR</sequence>
<evidence type="ECO:0000255" key="1">
    <source>
        <dbReference type="HAMAP-Rule" id="MF_00225"/>
    </source>
</evidence>
<dbReference type="EC" id="1.3.5.2" evidence="1"/>
<dbReference type="EMBL" id="AP009384">
    <property type="protein sequence ID" value="BAF90638.1"/>
    <property type="molecule type" value="Genomic_DNA"/>
</dbReference>
<dbReference type="RefSeq" id="WP_012173159.1">
    <property type="nucleotide sequence ID" value="NC_009937.1"/>
</dbReference>
<dbReference type="SMR" id="A8HZX8"/>
<dbReference type="STRING" id="438753.AZC_4640"/>
<dbReference type="KEGG" id="azc:AZC_4640"/>
<dbReference type="eggNOG" id="COG0167">
    <property type="taxonomic scope" value="Bacteria"/>
</dbReference>
<dbReference type="HOGENOM" id="CLU_013640_0_0_5"/>
<dbReference type="UniPathway" id="UPA00070">
    <property type="reaction ID" value="UER00946"/>
</dbReference>
<dbReference type="Proteomes" id="UP000000270">
    <property type="component" value="Chromosome"/>
</dbReference>
<dbReference type="GO" id="GO:0005737">
    <property type="term" value="C:cytoplasm"/>
    <property type="evidence" value="ECO:0007669"/>
    <property type="project" value="InterPro"/>
</dbReference>
<dbReference type="GO" id="GO:0005886">
    <property type="term" value="C:plasma membrane"/>
    <property type="evidence" value="ECO:0007669"/>
    <property type="project" value="UniProtKB-SubCell"/>
</dbReference>
<dbReference type="GO" id="GO:0106430">
    <property type="term" value="F:dihydroorotate dehydrogenase (quinone) activity"/>
    <property type="evidence" value="ECO:0007669"/>
    <property type="project" value="UniProtKB-EC"/>
</dbReference>
<dbReference type="GO" id="GO:0006207">
    <property type="term" value="P:'de novo' pyrimidine nucleobase biosynthetic process"/>
    <property type="evidence" value="ECO:0007669"/>
    <property type="project" value="InterPro"/>
</dbReference>
<dbReference type="GO" id="GO:0044205">
    <property type="term" value="P:'de novo' UMP biosynthetic process"/>
    <property type="evidence" value="ECO:0007669"/>
    <property type="project" value="UniProtKB-UniRule"/>
</dbReference>
<dbReference type="CDD" id="cd04738">
    <property type="entry name" value="DHOD_2_like"/>
    <property type="match status" value="1"/>
</dbReference>
<dbReference type="Gene3D" id="3.20.20.70">
    <property type="entry name" value="Aldolase class I"/>
    <property type="match status" value="1"/>
</dbReference>
<dbReference type="HAMAP" id="MF_00225">
    <property type="entry name" value="DHO_dh_type2"/>
    <property type="match status" value="1"/>
</dbReference>
<dbReference type="InterPro" id="IPR013785">
    <property type="entry name" value="Aldolase_TIM"/>
</dbReference>
<dbReference type="InterPro" id="IPR050074">
    <property type="entry name" value="DHO_dehydrogenase"/>
</dbReference>
<dbReference type="InterPro" id="IPR005719">
    <property type="entry name" value="Dihydroorotate_DH_2"/>
</dbReference>
<dbReference type="InterPro" id="IPR005720">
    <property type="entry name" value="Dihydroorotate_DH_cat"/>
</dbReference>
<dbReference type="InterPro" id="IPR001295">
    <property type="entry name" value="Dihydroorotate_DH_CS"/>
</dbReference>
<dbReference type="NCBIfam" id="NF003645">
    <property type="entry name" value="PRK05286.1-2"/>
    <property type="match status" value="1"/>
</dbReference>
<dbReference type="NCBIfam" id="NF003652">
    <property type="entry name" value="PRK05286.2-5"/>
    <property type="match status" value="1"/>
</dbReference>
<dbReference type="NCBIfam" id="TIGR01036">
    <property type="entry name" value="pyrD_sub2"/>
    <property type="match status" value="1"/>
</dbReference>
<dbReference type="PANTHER" id="PTHR48109:SF4">
    <property type="entry name" value="DIHYDROOROTATE DEHYDROGENASE (QUINONE), MITOCHONDRIAL"/>
    <property type="match status" value="1"/>
</dbReference>
<dbReference type="PANTHER" id="PTHR48109">
    <property type="entry name" value="DIHYDROOROTATE DEHYDROGENASE (QUINONE), MITOCHONDRIAL-RELATED"/>
    <property type="match status" value="1"/>
</dbReference>
<dbReference type="Pfam" id="PF01180">
    <property type="entry name" value="DHO_dh"/>
    <property type="match status" value="1"/>
</dbReference>
<dbReference type="SUPFAM" id="SSF51395">
    <property type="entry name" value="FMN-linked oxidoreductases"/>
    <property type="match status" value="1"/>
</dbReference>
<dbReference type="PROSITE" id="PS00911">
    <property type="entry name" value="DHODEHASE_1"/>
    <property type="match status" value="1"/>
</dbReference>
<dbReference type="PROSITE" id="PS00912">
    <property type="entry name" value="DHODEHASE_2"/>
    <property type="match status" value="1"/>
</dbReference>
<gene>
    <name evidence="1" type="primary">pyrD</name>
    <name type="ordered locus">AZC_4640</name>
</gene>
<reference key="1">
    <citation type="submission" date="2007-04" db="EMBL/GenBank/DDBJ databases">
        <title>Complete genome sequence of the nitrogen-fixing bacterium Azorhizobium caulinodans ORS571.</title>
        <authorList>
            <person name="Lee K.B."/>
            <person name="Backer P.D."/>
            <person name="Aono T."/>
            <person name="Liu C.T."/>
            <person name="Suzuki S."/>
            <person name="Suzuki T."/>
            <person name="Kaneko T."/>
            <person name="Yamada M."/>
            <person name="Tabata S."/>
            <person name="Kupfer D.M."/>
            <person name="Najar F.Z."/>
            <person name="Wiley G.B."/>
            <person name="Roe B."/>
            <person name="Binnewies T."/>
            <person name="Ussery D."/>
            <person name="Vereecke D."/>
            <person name="Gevers D."/>
            <person name="Holsters M."/>
            <person name="Oyaizu H."/>
        </authorList>
    </citation>
    <scope>NUCLEOTIDE SEQUENCE [LARGE SCALE GENOMIC DNA]</scope>
    <source>
        <strain>ATCC 43989 / DSM 5975 / JCM 20966 / LMG 6465 / NBRC 14845 / NCIMB 13405 / ORS 571</strain>
    </source>
</reference>
<protein>
    <recommendedName>
        <fullName evidence="1">Dihydroorotate dehydrogenase (quinone)</fullName>
        <ecNumber evidence="1">1.3.5.2</ecNumber>
    </recommendedName>
    <alternativeName>
        <fullName evidence="1">DHOdehase</fullName>
        <shortName evidence="1">DHOD</shortName>
        <shortName evidence="1">DHODase</shortName>
    </alternativeName>
    <alternativeName>
        <fullName evidence="1">Dihydroorotate oxidase</fullName>
    </alternativeName>
</protein>
<accession>A8HZX8</accession>